<name>XPO7A_XENLA</name>
<dbReference type="EMBL" id="AJ620730">
    <property type="protein sequence ID" value="CAF05962.1"/>
    <property type="molecule type" value="mRNA"/>
</dbReference>
<dbReference type="RefSeq" id="NP_001084497.1">
    <property type="nucleotide sequence ID" value="NM_001091028.1"/>
</dbReference>
<dbReference type="SMR" id="Q704U0"/>
<dbReference type="BioGRID" id="100861">
    <property type="interactions" value="2"/>
</dbReference>
<dbReference type="GeneID" id="407845"/>
<dbReference type="KEGG" id="xla:407845"/>
<dbReference type="AGR" id="Xenbase:XB-GENE-6256444"/>
<dbReference type="CTD" id="407845"/>
<dbReference type="Xenbase" id="XB-GENE-6256444">
    <property type="gene designation" value="xpo7.S"/>
</dbReference>
<dbReference type="OrthoDB" id="244158at2759"/>
<dbReference type="Proteomes" id="UP000186698">
    <property type="component" value="Chromosome 3S"/>
</dbReference>
<dbReference type="Bgee" id="407845">
    <property type="expression patterns" value="Expressed in testis and 20 other cell types or tissues"/>
</dbReference>
<dbReference type="GO" id="GO:0005737">
    <property type="term" value="C:cytoplasm"/>
    <property type="evidence" value="ECO:0000318"/>
    <property type="project" value="GO_Central"/>
</dbReference>
<dbReference type="GO" id="GO:0005643">
    <property type="term" value="C:nuclear pore"/>
    <property type="evidence" value="ECO:0000318"/>
    <property type="project" value="GO_Central"/>
</dbReference>
<dbReference type="GO" id="GO:0005049">
    <property type="term" value="F:nuclear export signal receptor activity"/>
    <property type="evidence" value="ECO:0000318"/>
    <property type="project" value="GO_Central"/>
</dbReference>
<dbReference type="GO" id="GO:0031267">
    <property type="term" value="F:small GTPase binding"/>
    <property type="evidence" value="ECO:0007669"/>
    <property type="project" value="InterPro"/>
</dbReference>
<dbReference type="GO" id="GO:0006611">
    <property type="term" value="P:protein export from nucleus"/>
    <property type="evidence" value="ECO:0000318"/>
    <property type="project" value="GO_Central"/>
</dbReference>
<dbReference type="FunFam" id="1.25.10.10:FF:000042">
    <property type="entry name" value="exportin-7 isoform X1"/>
    <property type="match status" value="1"/>
</dbReference>
<dbReference type="FunFam" id="1.25.10.10:FF:000059">
    <property type="entry name" value="exportin-7 isoform X2"/>
    <property type="match status" value="1"/>
</dbReference>
<dbReference type="Gene3D" id="1.25.10.10">
    <property type="entry name" value="Leucine-rich Repeat Variant"/>
    <property type="match status" value="2"/>
</dbReference>
<dbReference type="InterPro" id="IPR011989">
    <property type="entry name" value="ARM-like"/>
</dbReference>
<dbReference type="InterPro" id="IPR016024">
    <property type="entry name" value="ARM-type_fold"/>
</dbReference>
<dbReference type="InterPro" id="IPR001494">
    <property type="entry name" value="Importin-beta_N"/>
</dbReference>
<dbReference type="InterPro" id="IPR044189">
    <property type="entry name" value="XPO4/7-like"/>
</dbReference>
<dbReference type="PANTHER" id="PTHR12596">
    <property type="entry name" value="EXPORTIN 4,7-RELATED"/>
    <property type="match status" value="1"/>
</dbReference>
<dbReference type="PANTHER" id="PTHR12596:SF2">
    <property type="entry name" value="EXPORTIN-7 ISOFORM X1"/>
    <property type="match status" value="1"/>
</dbReference>
<dbReference type="Pfam" id="PF03810">
    <property type="entry name" value="IBN_N"/>
    <property type="match status" value="1"/>
</dbReference>
<dbReference type="SMART" id="SM00913">
    <property type="entry name" value="IBN_N"/>
    <property type="match status" value="1"/>
</dbReference>
<dbReference type="SUPFAM" id="SSF48371">
    <property type="entry name" value="ARM repeat"/>
    <property type="match status" value="1"/>
</dbReference>
<dbReference type="PROSITE" id="PS50166">
    <property type="entry name" value="IMPORTIN_B_NT"/>
    <property type="match status" value="1"/>
</dbReference>
<evidence type="ECO:0000250" key="1"/>
<evidence type="ECO:0000255" key="2">
    <source>
        <dbReference type="PROSITE-ProRule" id="PRU00115"/>
    </source>
</evidence>
<evidence type="ECO:0000269" key="3">
    <source>
    </source>
</evidence>
<evidence type="ECO:0000305" key="4"/>
<accession>Q704U0</accession>
<reference key="1">
    <citation type="journal article" date="2004" name="EMBO J.">
        <title>Exportin 7 defines a novel general nuclear export pathway.</title>
        <authorList>
            <person name="Mingot J.-M."/>
            <person name="Bohnsack M.T."/>
            <person name="Jaekle U."/>
            <person name="Goerlich D."/>
        </authorList>
    </citation>
    <scope>NUCLEOTIDE SEQUENCE [MRNA]</scope>
    <scope>FUNCTION IN PROTEIN NUCLEAR EXPORT</scope>
    <scope>TISSUE SPECIFICITY</scope>
    <source>
        <tissue>Oocyte</tissue>
    </source>
</reference>
<protein>
    <recommendedName>
        <fullName>Exportin-7-A</fullName>
    </recommendedName>
</protein>
<organism>
    <name type="scientific">Xenopus laevis</name>
    <name type="common">African clawed frog</name>
    <dbReference type="NCBI Taxonomy" id="8355"/>
    <lineage>
        <taxon>Eukaryota</taxon>
        <taxon>Metazoa</taxon>
        <taxon>Chordata</taxon>
        <taxon>Craniata</taxon>
        <taxon>Vertebrata</taxon>
        <taxon>Euteleostomi</taxon>
        <taxon>Amphibia</taxon>
        <taxon>Batrachia</taxon>
        <taxon>Anura</taxon>
        <taxon>Pipoidea</taxon>
        <taxon>Pipidae</taxon>
        <taxon>Xenopodinae</taxon>
        <taxon>Xenopus</taxon>
        <taxon>Xenopus</taxon>
    </lineage>
</organism>
<keyword id="KW-0963">Cytoplasm</keyword>
<keyword id="KW-0539">Nucleus</keyword>
<keyword id="KW-0653">Protein transport</keyword>
<keyword id="KW-1185">Reference proteome</keyword>
<keyword id="KW-0813">Transport</keyword>
<comment type="function">
    <text evidence="3">Mediates the nuclear export of proteins (cargos) with broad substrate specificity.</text>
</comment>
<comment type="subcellular location">
    <subcellularLocation>
        <location evidence="1">Cytoplasm</location>
    </subcellularLocation>
    <subcellularLocation>
        <location evidence="1">Nucleus</location>
    </subcellularLocation>
</comment>
<comment type="tissue specificity">
    <text evidence="3">Expressed in oocytes (at protein level).</text>
</comment>
<comment type="similarity">
    <text evidence="4">Belongs to the exportin family.</text>
</comment>
<feature type="chain" id="PRO_0000237675" description="Exportin-7-A">
    <location>
        <begin position="1"/>
        <end position="1087"/>
    </location>
</feature>
<feature type="domain" description="Importin N-terminal" evidence="2">
    <location>
        <begin position="30"/>
        <end position="96"/>
    </location>
</feature>
<sequence length="1087" mass="123160">MADPVQSLAQLEILCKQLYETTDTSTRLQAEKALVEFTNSSECLSKCQLLLERGSSSYSQLLAATCLTKLVSRSTNPLPLEQRIDIRNYVLTYLATRPKLASFVTQALIQLYARITKLGWFDSQKDEYVFRSVIGDVTRFLQDSVEYCVIGVSILSQLTNEINQADATHPLTKHRKIASSFRDSALFEIFTLSCNLLKQASGKSLLLSDGSQHDLLMQLLKLTHNCLNFDFIGTSTDESSDDLCTVQIPTSWRSAFLDSSTLQLFFDLYHSIPPNFSPLVLSCLVQIASVRRSLFNNAERAKFLSHLVDGVKRILENPQSLSDPNNYHEFCRLLARLKSNYQLGELVKVENYPEVIRLIANFTVTSLQHWEFAPNSVHYLLSLWQRLAASVPYVKATEPHLLETYTPEVTKAYVTSRLESVHIILRDGLEDPLEDAGLVQQQLDQLSTIGRCEYDKTCALLVQLFDQSAQTYQELLQSGSAPSMELAVQEGRLTWLVYIIGAVIGGRVSFASTDEQDAMDGELVCRVLQLMNLTDSRLAQAGNEKLELSMLSLFEQFRKIYIGDQVQKSSKLYRRLSDVLGLNDETMVLSIFIGKIITNLKYWGRCEPITSKTLQLLNDLSIGYSSVRKLVKLSAVQFMLNNHTSEHFSFLGINSQSNLSDMRCRTTFYTALGRLLMVDLGEDEEQFSQFMMPLTAAFESLAQMFNSNNFNEQEAKRSLVGLVRDLRGIAFAFNAKSSFMMLFDWIYPAYMPILQRAIELWFHDPACTTPILKLMAELVHNRSQRLQFDVSSPNGILLFRETSKMITTYGNRILTLGELPKEQLYVLKLKGISICFSVLKAALSGNYVNFGVFRLYGDEALDNALQTFVKLLLSVPHSDLLDYPKLSQSYYSLLEVLTQDHMSFIASLEPHVIMYILSSISEGLTALDTMVCTGCCSCLDHIVTYLFKQLSRSGKKRGAPPPQESERFLHIMQQHPEMIQQMLSTVLNIIIFEDCRNQWSMSRPLLGLILLNEKYFSDLRSSIVSSQPPEKQQAMHLCFENLMEGIEGNLLTKNRDRFTQNLSAFRREVNDSMKNSSCGPNSNEMMS</sequence>
<proteinExistence type="evidence at protein level"/>
<gene>
    <name type="primary">xpo7-a</name>
</gene>